<sequence length="355" mass="39209">MSLFDTINAGGAQLLGIAWPTVWAIVRILVVAVVILLCVAYLILWERKLIGWMHVRLGPNRVGPAGLLQPIADVLKLLLKEVIQPSAASRWLYLIAPVMTVVPAFAVWAVIPFQAEAVLANVNAGLLYAMAISSIGVYAVILAGWASNSKYAFLGAMRAAAQMVSYEISMGFALVLVLMTAGSLNLSEIVGSQQHGFFAGHGVNFLSWNWLPLLPAFVVYFVSGIAETNRHPFDVVEGESEIVAGHMIDYSGMAFALFFLAEYINMIVISALAATLFLGGWDAPFEFLSFIPGVFWLVLKVFALLSVFIWVRATFPRYRYDQIMRLGWKVFLPVTVIWVVVVGFWMMSPLNIWVK</sequence>
<accession>B1YTQ0</accession>
<name>NUOH_BURA4</name>
<organism>
    <name type="scientific">Burkholderia ambifaria (strain MC40-6)</name>
    <dbReference type="NCBI Taxonomy" id="398577"/>
    <lineage>
        <taxon>Bacteria</taxon>
        <taxon>Pseudomonadati</taxon>
        <taxon>Pseudomonadota</taxon>
        <taxon>Betaproteobacteria</taxon>
        <taxon>Burkholderiales</taxon>
        <taxon>Burkholderiaceae</taxon>
        <taxon>Burkholderia</taxon>
        <taxon>Burkholderia cepacia complex</taxon>
    </lineage>
</organism>
<gene>
    <name evidence="1" type="primary">nuoH</name>
    <name type="ordered locus">BamMC406_2159</name>
</gene>
<dbReference type="EC" id="7.1.1.-" evidence="1"/>
<dbReference type="EMBL" id="CP001025">
    <property type="protein sequence ID" value="ACB64638.1"/>
    <property type="molecule type" value="Genomic_DNA"/>
</dbReference>
<dbReference type="RefSeq" id="WP_006750463.1">
    <property type="nucleotide sequence ID" value="NC_010551.1"/>
</dbReference>
<dbReference type="SMR" id="B1YTQ0"/>
<dbReference type="GeneID" id="93085512"/>
<dbReference type="KEGG" id="bac:BamMC406_2159"/>
<dbReference type="HOGENOM" id="CLU_015134_0_1_4"/>
<dbReference type="OrthoDB" id="9803734at2"/>
<dbReference type="Proteomes" id="UP000001680">
    <property type="component" value="Chromosome 1"/>
</dbReference>
<dbReference type="GO" id="GO:0005886">
    <property type="term" value="C:plasma membrane"/>
    <property type="evidence" value="ECO:0007669"/>
    <property type="project" value="UniProtKB-SubCell"/>
</dbReference>
<dbReference type="GO" id="GO:0003954">
    <property type="term" value="F:NADH dehydrogenase activity"/>
    <property type="evidence" value="ECO:0007669"/>
    <property type="project" value="TreeGrafter"/>
</dbReference>
<dbReference type="GO" id="GO:0016655">
    <property type="term" value="F:oxidoreductase activity, acting on NAD(P)H, quinone or similar compound as acceptor"/>
    <property type="evidence" value="ECO:0007669"/>
    <property type="project" value="UniProtKB-UniRule"/>
</dbReference>
<dbReference type="GO" id="GO:0048038">
    <property type="term" value="F:quinone binding"/>
    <property type="evidence" value="ECO:0007669"/>
    <property type="project" value="UniProtKB-KW"/>
</dbReference>
<dbReference type="GO" id="GO:0009060">
    <property type="term" value="P:aerobic respiration"/>
    <property type="evidence" value="ECO:0007669"/>
    <property type="project" value="TreeGrafter"/>
</dbReference>
<dbReference type="HAMAP" id="MF_01350">
    <property type="entry name" value="NDH1_NuoH"/>
    <property type="match status" value="1"/>
</dbReference>
<dbReference type="InterPro" id="IPR001694">
    <property type="entry name" value="NADH_UbQ_OxRdtase_su1/FPO"/>
</dbReference>
<dbReference type="InterPro" id="IPR018086">
    <property type="entry name" value="NADH_UbQ_OxRdtase_su1_CS"/>
</dbReference>
<dbReference type="NCBIfam" id="NF004741">
    <property type="entry name" value="PRK06076.1-2"/>
    <property type="match status" value="1"/>
</dbReference>
<dbReference type="NCBIfam" id="NF004742">
    <property type="entry name" value="PRK06076.1-3"/>
    <property type="match status" value="1"/>
</dbReference>
<dbReference type="PANTHER" id="PTHR11432">
    <property type="entry name" value="NADH DEHYDROGENASE SUBUNIT 1"/>
    <property type="match status" value="1"/>
</dbReference>
<dbReference type="PANTHER" id="PTHR11432:SF3">
    <property type="entry name" value="NADH-UBIQUINONE OXIDOREDUCTASE CHAIN 1"/>
    <property type="match status" value="1"/>
</dbReference>
<dbReference type="Pfam" id="PF00146">
    <property type="entry name" value="NADHdh"/>
    <property type="match status" value="1"/>
</dbReference>
<dbReference type="PROSITE" id="PS00668">
    <property type="entry name" value="COMPLEX1_ND1_2"/>
    <property type="match status" value="1"/>
</dbReference>
<keyword id="KW-0997">Cell inner membrane</keyword>
<keyword id="KW-1003">Cell membrane</keyword>
<keyword id="KW-0472">Membrane</keyword>
<keyword id="KW-0520">NAD</keyword>
<keyword id="KW-0874">Quinone</keyword>
<keyword id="KW-1278">Translocase</keyword>
<keyword id="KW-0812">Transmembrane</keyword>
<keyword id="KW-1133">Transmembrane helix</keyword>
<keyword id="KW-0830">Ubiquinone</keyword>
<reference key="1">
    <citation type="submission" date="2008-04" db="EMBL/GenBank/DDBJ databases">
        <title>Complete sequence of chromosome 1 of Burkholderia ambifaria MC40-6.</title>
        <authorList>
            <person name="Copeland A."/>
            <person name="Lucas S."/>
            <person name="Lapidus A."/>
            <person name="Glavina del Rio T."/>
            <person name="Dalin E."/>
            <person name="Tice H."/>
            <person name="Pitluck S."/>
            <person name="Chain P."/>
            <person name="Malfatti S."/>
            <person name="Shin M."/>
            <person name="Vergez L."/>
            <person name="Lang D."/>
            <person name="Schmutz J."/>
            <person name="Larimer F."/>
            <person name="Land M."/>
            <person name="Hauser L."/>
            <person name="Kyrpides N."/>
            <person name="Lykidis A."/>
            <person name="Ramette A."/>
            <person name="Konstantinidis K."/>
            <person name="Tiedje J."/>
            <person name="Richardson P."/>
        </authorList>
    </citation>
    <scope>NUCLEOTIDE SEQUENCE [LARGE SCALE GENOMIC DNA]</scope>
    <source>
        <strain>MC40-6</strain>
    </source>
</reference>
<protein>
    <recommendedName>
        <fullName evidence="1">NADH-quinone oxidoreductase subunit H</fullName>
        <ecNumber evidence="1">7.1.1.-</ecNumber>
    </recommendedName>
    <alternativeName>
        <fullName evidence="1">NADH dehydrogenase I subunit H</fullName>
    </alternativeName>
    <alternativeName>
        <fullName evidence="1">NDH-1 subunit H</fullName>
    </alternativeName>
</protein>
<feature type="chain" id="PRO_1000143578" description="NADH-quinone oxidoreductase subunit H">
    <location>
        <begin position="1"/>
        <end position="355"/>
    </location>
</feature>
<feature type="transmembrane region" description="Helical" evidence="1">
    <location>
        <begin position="25"/>
        <end position="45"/>
    </location>
</feature>
<feature type="transmembrane region" description="Helical" evidence="1">
    <location>
        <begin position="91"/>
        <end position="111"/>
    </location>
</feature>
<feature type="transmembrane region" description="Helical" evidence="1">
    <location>
        <begin position="126"/>
        <end position="146"/>
    </location>
</feature>
<feature type="transmembrane region" description="Helical" evidence="1">
    <location>
        <begin position="170"/>
        <end position="190"/>
    </location>
</feature>
<feature type="transmembrane region" description="Helical" evidence="1">
    <location>
        <begin position="205"/>
        <end position="225"/>
    </location>
</feature>
<feature type="transmembrane region" description="Helical" evidence="1">
    <location>
        <begin position="253"/>
        <end position="273"/>
    </location>
</feature>
<feature type="transmembrane region" description="Helical" evidence="1">
    <location>
        <begin position="290"/>
        <end position="310"/>
    </location>
</feature>
<feature type="transmembrane region" description="Helical" evidence="1">
    <location>
        <begin position="330"/>
        <end position="350"/>
    </location>
</feature>
<evidence type="ECO:0000255" key="1">
    <source>
        <dbReference type="HAMAP-Rule" id="MF_01350"/>
    </source>
</evidence>
<comment type="function">
    <text evidence="1">NDH-1 shuttles electrons from NADH, via FMN and iron-sulfur (Fe-S) centers, to quinones in the respiratory chain. The immediate electron acceptor for the enzyme in this species is believed to be ubiquinone. Couples the redox reaction to proton translocation (for every two electrons transferred, four hydrogen ions are translocated across the cytoplasmic membrane), and thus conserves the redox energy in a proton gradient. This subunit may bind ubiquinone.</text>
</comment>
<comment type="catalytic activity">
    <reaction evidence="1">
        <text>a quinone + NADH + 5 H(+)(in) = a quinol + NAD(+) + 4 H(+)(out)</text>
        <dbReference type="Rhea" id="RHEA:57888"/>
        <dbReference type="ChEBI" id="CHEBI:15378"/>
        <dbReference type="ChEBI" id="CHEBI:24646"/>
        <dbReference type="ChEBI" id="CHEBI:57540"/>
        <dbReference type="ChEBI" id="CHEBI:57945"/>
        <dbReference type="ChEBI" id="CHEBI:132124"/>
    </reaction>
</comment>
<comment type="subunit">
    <text evidence="1">NDH-1 is composed of 14 different subunits. Subunits NuoA, H, J, K, L, M, N constitute the membrane sector of the complex.</text>
</comment>
<comment type="subcellular location">
    <subcellularLocation>
        <location evidence="1">Cell inner membrane</location>
        <topology evidence="1">Multi-pass membrane protein</topology>
    </subcellularLocation>
</comment>
<comment type="similarity">
    <text evidence="1">Belongs to the complex I subunit 1 family.</text>
</comment>
<proteinExistence type="inferred from homology"/>